<gene>
    <name evidence="1" type="primary">rpsS</name>
    <name type="ordered locus">VS_2828</name>
</gene>
<reference key="1">
    <citation type="submission" date="2009-02" db="EMBL/GenBank/DDBJ databases">
        <title>Vibrio splendidus str. LGP32 complete genome.</title>
        <authorList>
            <person name="Mazel D."/>
            <person name="Le Roux F."/>
        </authorList>
    </citation>
    <scope>NUCLEOTIDE SEQUENCE [LARGE SCALE GENOMIC DNA]</scope>
    <source>
        <strain>LGP32</strain>
    </source>
</reference>
<feature type="chain" id="PRO_1000146424" description="Small ribosomal subunit protein uS19">
    <location>
        <begin position="1"/>
        <end position="92"/>
    </location>
</feature>
<protein>
    <recommendedName>
        <fullName evidence="1">Small ribosomal subunit protein uS19</fullName>
    </recommendedName>
    <alternativeName>
        <fullName evidence="2">30S ribosomal protein S19</fullName>
    </alternativeName>
</protein>
<evidence type="ECO:0000255" key="1">
    <source>
        <dbReference type="HAMAP-Rule" id="MF_00531"/>
    </source>
</evidence>
<evidence type="ECO:0000305" key="2"/>
<proteinExistence type="inferred from homology"/>
<comment type="function">
    <text evidence="1">Protein S19 forms a complex with S13 that binds strongly to the 16S ribosomal RNA.</text>
</comment>
<comment type="similarity">
    <text evidence="1">Belongs to the universal ribosomal protein uS19 family.</text>
</comment>
<sequence>MPRSLKKGPFIDLHLLKKVEKAVESGDKKPIKTWSRRSMIIPTMIGLTIAVHNGRQHVPVFVTEEMIGHKLGEFAPTRTYRGHAADKKAKKK</sequence>
<keyword id="KW-0687">Ribonucleoprotein</keyword>
<keyword id="KW-0689">Ribosomal protein</keyword>
<keyword id="KW-0694">RNA-binding</keyword>
<keyword id="KW-0699">rRNA-binding</keyword>
<name>RS19_VIBA3</name>
<accession>B7VLF3</accession>
<organism>
    <name type="scientific">Vibrio atlanticus (strain LGP32)</name>
    <name type="common">Vibrio splendidus (strain Mel32)</name>
    <dbReference type="NCBI Taxonomy" id="575788"/>
    <lineage>
        <taxon>Bacteria</taxon>
        <taxon>Pseudomonadati</taxon>
        <taxon>Pseudomonadota</taxon>
        <taxon>Gammaproteobacteria</taxon>
        <taxon>Vibrionales</taxon>
        <taxon>Vibrionaceae</taxon>
        <taxon>Vibrio</taxon>
    </lineage>
</organism>
<dbReference type="EMBL" id="FM954972">
    <property type="protein sequence ID" value="CAV20121.1"/>
    <property type="molecule type" value="Genomic_DNA"/>
</dbReference>
<dbReference type="SMR" id="B7VLF3"/>
<dbReference type="STRING" id="575788.VS_2828"/>
<dbReference type="KEGG" id="vsp:VS_2828"/>
<dbReference type="eggNOG" id="COG0185">
    <property type="taxonomic scope" value="Bacteria"/>
</dbReference>
<dbReference type="HOGENOM" id="CLU_144911_0_1_6"/>
<dbReference type="Proteomes" id="UP000009100">
    <property type="component" value="Chromosome 1"/>
</dbReference>
<dbReference type="GO" id="GO:0005737">
    <property type="term" value="C:cytoplasm"/>
    <property type="evidence" value="ECO:0007669"/>
    <property type="project" value="UniProtKB-ARBA"/>
</dbReference>
<dbReference type="GO" id="GO:0015935">
    <property type="term" value="C:small ribosomal subunit"/>
    <property type="evidence" value="ECO:0007669"/>
    <property type="project" value="InterPro"/>
</dbReference>
<dbReference type="GO" id="GO:0019843">
    <property type="term" value="F:rRNA binding"/>
    <property type="evidence" value="ECO:0007669"/>
    <property type="project" value="UniProtKB-UniRule"/>
</dbReference>
<dbReference type="GO" id="GO:0003735">
    <property type="term" value="F:structural constituent of ribosome"/>
    <property type="evidence" value="ECO:0007669"/>
    <property type="project" value="InterPro"/>
</dbReference>
<dbReference type="GO" id="GO:0000028">
    <property type="term" value="P:ribosomal small subunit assembly"/>
    <property type="evidence" value="ECO:0007669"/>
    <property type="project" value="TreeGrafter"/>
</dbReference>
<dbReference type="GO" id="GO:0006412">
    <property type="term" value="P:translation"/>
    <property type="evidence" value="ECO:0007669"/>
    <property type="project" value="UniProtKB-UniRule"/>
</dbReference>
<dbReference type="FunFam" id="3.30.860.10:FF:000001">
    <property type="entry name" value="30S ribosomal protein S19"/>
    <property type="match status" value="1"/>
</dbReference>
<dbReference type="Gene3D" id="3.30.860.10">
    <property type="entry name" value="30s Ribosomal Protein S19, Chain A"/>
    <property type="match status" value="1"/>
</dbReference>
<dbReference type="HAMAP" id="MF_00531">
    <property type="entry name" value="Ribosomal_uS19"/>
    <property type="match status" value="1"/>
</dbReference>
<dbReference type="InterPro" id="IPR002222">
    <property type="entry name" value="Ribosomal_uS19"/>
</dbReference>
<dbReference type="InterPro" id="IPR005732">
    <property type="entry name" value="Ribosomal_uS19_bac-type"/>
</dbReference>
<dbReference type="InterPro" id="IPR020934">
    <property type="entry name" value="Ribosomal_uS19_CS"/>
</dbReference>
<dbReference type="InterPro" id="IPR023575">
    <property type="entry name" value="Ribosomal_uS19_SF"/>
</dbReference>
<dbReference type="NCBIfam" id="TIGR01050">
    <property type="entry name" value="rpsS_bact"/>
    <property type="match status" value="1"/>
</dbReference>
<dbReference type="PANTHER" id="PTHR11880">
    <property type="entry name" value="RIBOSOMAL PROTEIN S19P FAMILY MEMBER"/>
    <property type="match status" value="1"/>
</dbReference>
<dbReference type="PANTHER" id="PTHR11880:SF8">
    <property type="entry name" value="SMALL RIBOSOMAL SUBUNIT PROTEIN US19M"/>
    <property type="match status" value="1"/>
</dbReference>
<dbReference type="Pfam" id="PF00203">
    <property type="entry name" value="Ribosomal_S19"/>
    <property type="match status" value="1"/>
</dbReference>
<dbReference type="PIRSF" id="PIRSF002144">
    <property type="entry name" value="Ribosomal_S19"/>
    <property type="match status" value="1"/>
</dbReference>
<dbReference type="PRINTS" id="PR00975">
    <property type="entry name" value="RIBOSOMALS19"/>
</dbReference>
<dbReference type="SUPFAM" id="SSF54570">
    <property type="entry name" value="Ribosomal protein S19"/>
    <property type="match status" value="1"/>
</dbReference>
<dbReference type="PROSITE" id="PS00323">
    <property type="entry name" value="RIBOSOMAL_S19"/>
    <property type="match status" value="1"/>
</dbReference>